<comment type="function">
    <text evidence="1">Catalyzes the radical-mediated insertion of two sulfur atoms into the C-6 and C-8 positions of the octanoyl moiety bound to the lipoyl domains of lipoate-dependent enzymes, thereby converting the octanoylated domains into lipoylated derivatives.</text>
</comment>
<comment type="catalytic activity">
    <reaction evidence="1">
        <text>[[Fe-S] cluster scaffold protein carrying a second [4Fe-4S](2+) cluster] + N(6)-octanoyl-L-lysyl-[protein] + 2 oxidized [2Fe-2S]-[ferredoxin] + 2 S-adenosyl-L-methionine + 4 H(+) = [[Fe-S] cluster scaffold protein] + N(6)-[(R)-dihydrolipoyl]-L-lysyl-[protein] + 4 Fe(3+) + 2 hydrogen sulfide + 2 5'-deoxyadenosine + 2 L-methionine + 2 reduced [2Fe-2S]-[ferredoxin]</text>
        <dbReference type="Rhea" id="RHEA:16585"/>
        <dbReference type="Rhea" id="RHEA-COMP:9928"/>
        <dbReference type="Rhea" id="RHEA-COMP:10000"/>
        <dbReference type="Rhea" id="RHEA-COMP:10001"/>
        <dbReference type="Rhea" id="RHEA-COMP:10475"/>
        <dbReference type="Rhea" id="RHEA-COMP:14568"/>
        <dbReference type="Rhea" id="RHEA-COMP:14569"/>
        <dbReference type="ChEBI" id="CHEBI:15378"/>
        <dbReference type="ChEBI" id="CHEBI:17319"/>
        <dbReference type="ChEBI" id="CHEBI:29034"/>
        <dbReference type="ChEBI" id="CHEBI:29919"/>
        <dbReference type="ChEBI" id="CHEBI:33722"/>
        <dbReference type="ChEBI" id="CHEBI:33737"/>
        <dbReference type="ChEBI" id="CHEBI:33738"/>
        <dbReference type="ChEBI" id="CHEBI:57844"/>
        <dbReference type="ChEBI" id="CHEBI:59789"/>
        <dbReference type="ChEBI" id="CHEBI:78809"/>
        <dbReference type="ChEBI" id="CHEBI:83100"/>
        <dbReference type="EC" id="2.8.1.8"/>
    </reaction>
</comment>
<comment type="cofactor">
    <cofactor evidence="1">
        <name>[4Fe-4S] cluster</name>
        <dbReference type="ChEBI" id="CHEBI:49883"/>
    </cofactor>
    <text evidence="1">Binds 2 [4Fe-4S] clusters per subunit. One cluster is coordinated with 3 cysteines and an exchangeable S-adenosyl-L-methionine.</text>
</comment>
<comment type="pathway">
    <text evidence="1">Protein modification; protein lipoylation via endogenous pathway; protein N(6)-(lipoyl)lysine from octanoyl-[acyl-carrier-protein]: step 2/2.</text>
</comment>
<comment type="subcellular location">
    <subcellularLocation>
        <location evidence="1">Cytoplasm</location>
    </subcellularLocation>
</comment>
<comment type="similarity">
    <text evidence="1">Belongs to the radical SAM superfamily. Lipoyl synthase family.</text>
</comment>
<accession>A3QH60</accession>
<proteinExistence type="inferred from homology"/>
<sequence length="321" mass="36450">MSRPERLQPGVKLRDADKVSRIPVKVVPSERETMLRKPDWLRVKLPASNQRIVDIKQALRKNGLHSVCEEASCPNLAECFNHGTATFMILGAICTRRCPFCDVAHGRPLKPDAEEPVKLAQTIRDMKLKYVVITSVDRDDLRDGGAQHFADCIREIRKLNPEIKIEILVPDFRGRIDAALEILATEPPDVFNHNLETAPKHYRKARPGANYQWSLDLLKKFKEQHPHIPTKSGLMMGLGETNEEIAEVLRDLRAHNVEMLTLGQYLQPSKFHLPVERYVPPAEFDELKDYAEEIGFTHAACGPMVRSSYHADLQAQGKEVK</sequence>
<gene>
    <name evidence="1" type="primary">lipA</name>
    <name type="ordered locus">Shew_2942</name>
</gene>
<reference key="1">
    <citation type="submission" date="2007-03" db="EMBL/GenBank/DDBJ databases">
        <title>Complete sequence of Shewanella loihica PV-4.</title>
        <authorList>
            <consortium name="US DOE Joint Genome Institute"/>
            <person name="Copeland A."/>
            <person name="Lucas S."/>
            <person name="Lapidus A."/>
            <person name="Barry K."/>
            <person name="Detter J.C."/>
            <person name="Glavina del Rio T."/>
            <person name="Hammon N."/>
            <person name="Israni S."/>
            <person name="Dalin E."/>
            <person name="Tice H."/>
            <person name="Pitluck S."/>
            <person name="Chain P."/>
            <person name="Malfatti S."/>
            <person name="Shin M."/>
            <person name="Vergez L."/>
            <person name="Schmutz J."/>
            <person name="Larimer F."/>
            <person name="Land M."/>
            <person name="Hauser L."/>
            <person name="Kyrpides N."/>
            <person name="Mikhailova N."/>
            <person name="Romine M.F."/>
            <person name="Serres G."/>
            <person name="Fredrickson J."/>
            <person name="Tiedje J."/>
            <person name="Richardson P."/>
        </authorList>
    </citation>
    <scope>NUCLEOTIDE SEQUENCE [LARGE SCALE GENOMIC DNA]</scope>
    <source>
        <strain>ATCC BAA-1088 / PV-4</strain>
    </source>
</reference>
<protein>
    <recommendedName>
        <fullName evidence="1">Lipoyl synthase</fullName>
        <ecNumber evidence="1">2.8.1.8</ecNumber>
    </recommendedName>
    <alternativeName>
        <fullName evidence="1">Lip-syn</fullName>
        <shortName evidence="1">LS</shortName>
    </alternativeName>
    <alternativeName>
        <fullName evidence="1">Lipoate synthase</fullName>
    </alternativeName>
    <alternativeName>
        <fullName evidence="1">Lipoic acid synthase</fullName>
    </alternativeName>
    <alternativeName>
        <fullName evidence="1">Sulfur insertion protein LipA</fullName>
    </alternativeName>
</protein>
<organism>
    <name type="scientific">Shewanella loihica (strain ATCC BAA-1088 / PV-4)</name>
    <dbReference type="NCBI Taxonomy" id="323850"/>
    <lineage>
        <taxon>Bacteria</taxon>
        <taxon>Pseudomonadati</taxon>
        <taxon>Pseudomonadota</taxon>
        <taxon>Gammaproteobacteria</taxon>
        <taxon>Alteromonadales</taxon>
        <taxon>Shewanellaceae</taxon>
        <taxon>Shewanella</taxon>
    </lineage>
</organism>
<dbReference type="EC" id="2.8.1.8" evidence="1"/>
<dbReference type="EMBL" id="CP000606">
    <property type="protein sequence ID" value="ABO24808.1"/>
    <property type="molecule type" value="Genomic_DNA"/>
</dbReference>
<dbReference type="RefSeq" id="WP_011866739.1">
    <property type="nucleotide sequence ID" value="NC_009092.1"/>
</dbReference>
<dbReference type="SMR" id="A3QH60"/>
<dbReference type="STRING" id="323850.Shew_2942"/>
<dbReference type="KEGG" id="slo:Shew_2942"/>
<dbReference type="eggNOG" id="COG0320">
    <property type="taxonomic scope" value="Bacteria"/>
</dbReference>
<dbReference type="HOGENOM" id="CLU_033144_2_1_6"/>
<dbReference type="OrthoDB" id="9787898at2"/>
<dbReference type="UniPathway" id="UPA00538">
    <property type="reaction ID" value="UER00593"/>
</dbReference>
<dbReference type="Proteomes" id="UP000001558">
    <property type="component" value="Chromosome"/>
</dbReference>
<dbReference type="GO" id="GO:0005737">
    <property type="term" value="C:cytoplasm"/>
    <property type="evidence" value="ECO:0007669"/>
    <property type="project" value="UniProtKB-SubCell"/>
</dbReference>
<dbReference type="GO" id="GO:0051539">
    <property type="term" value="F:4 iron, 4 sulfur cluster binding"/>
    <property type="evidence" value="ECO:0007669"/>
    <property type="project" value="UniProtKB-UniRule"/>
</dbReference>
<dbReference type="GO" id="GO:0016992">
    <property type="term" value="F:lipoate synthase activity"/>
    <property type="evidence" value="ECO:0007669"/>
    <property type="project" value="UniProtKB-UniRule"/>
</dbReference>
<dbReference type="GO" id="GO:0046872">
    <property type="term" value="F:metal ion binding"/>
    <property type="evidence" value="ECO:0007669"/>
    <property type="project" value="UniProtKB-KW"/>
</dbReference>
<dbReference type="CDD" id="cd01335">
    <property type="entry name" value="Radical_SAM"/>
    <property type="match status" value="1"/>
</dbReference>
<dbReference type="FunFam" id="3.20.20.70:FF:000023">
    <property type="entry name" value="Lipoyl synthase"/>
    <property type="match status" value="1"/>
</dbReference>
<dbReference type="Gene3D" id="3.20.20.70">
    <property type="entry name" value="Aldolase class I"/>
    <property type="match status" value="1"/>
</dbReference>
<dbReference type="HAMAP" id="MF_00206">
    <property type="entry name" value="Lipoyl_synth"/>
    <property type="match status" value="1"/>
</dbReference>
<dbReference type="InterPro" id="IPR013785">
    <property type="entry name" value="Aldolase_TIM"/>
</dbReference>
<dbReference type="InterPro" id="IPR006638">
    <property type="entry name" value="Elp3/MiaA/NifB-like_rSAM"/>
</dbReference>
<dbReference type="InterPro" id="IPR003698">
    <property type="entry name" value="Lipoyl_synth"/>
</dbReference>
<dbReference type="InterPro" id="IPR007197">
    <property type="entry name" value="rSAM"/>
</dbReference>
<dbReference type="NCBIfam" id="TIGR00510">
    <property type="entry name" value="lipA"/>
    <property type="match status" value="1"/>
</dbReference>
<dbReference type="NCBIfam" id="NF004019">
    <property type="entry name" value="PRK05481.1"/>
    <property type="match status" value="1"/>
</dbReference>
<dbReference type="NCBIfam" id="NF009544">
    <property type="entry name" value="PRK12928.1"/>
    <property type="match status" value="1"/>
</dbReference>
<dbReference type="PANTHER" id="PTHR10949">
    <property type="entry name" value="LIPOYL SYNTHASE"/>
    <property type="match status" value="1"/>
</dbReference>
<dbReference type="PANTHER" id="PTHR10949:SF0">
    <property type="entry name" value="LIPOYL SYNTHASE, MITOCHONDRIAL"/>
    <property type="match status" value="1"/>
</dbReference>
<dbReference type="Pfam" id="PF04055">
    <property type="entry name" value="Radical_SAM"/>
    <property type="match status" value="1"/>
</dbReference>
<dbReference type="PIRSF" id="PIRSF005963">
    <property type="entry name" value="Lipoyl_synth"/>
    <property type="match status" value="1"/>
</dbReference>
<dbReference type="SFLD" id="SFLDF00271">
    <property type="entry name" value="lipoyl_synthase"/>
    <property type="match status" value="1"/>
</dbReference>
<dbReference type="SFLD" id="SFLDG01058">
    <property type="entry name" value="lipoyl_synthase_like"/>
    <property type="match status" value="1"/>
</dbReference>
<dbReference type="SMART" id="SM00729">
    <property type="entry name" value="Elp3"/>
    <property type="match status" value="1"/>
</dbReference>
<dbReference type="SUPFAM" id="SSF102114">
    <property type="entry name" value="Radical SAM enzymes"/>
    <property type="match status" value="1"/>
</dbReference>
<dbReference type="PROSITE" id="PS51918">
    <property type="entry name" value="RADICAL_SAM"/>
    <property type="match status" value="1"/>
</dbReference>
<evidence type="ECO:0000255" key="1">
    <source>
        <dbReference type="HAMAP-Rule" id="MF_00206"/>
    </source>
</evidence>
<evidence type="ECO:0000255" key="2">
    <source>
        <dbReference type="PROSITE-ProRule" id="PRU01266"/>
    </source>
</evidence>
<keyword id="KW-0004">4Fe-4S</keyword>
<keyword id="KW-0963">Cytoplasm</keyword>
<keyword id="KW-0408">Iron</keyword>
<keyword id="KW-0411">Iron-sulfur</keyword>
<keyword id="KW-0479">Metal-binding</keyword>
<keyword id="KW-1185">Reference proteome</keyword>
<keyword id="KW-0949">S-adenosyl-L-methionine</keyword>
<keyword id="KW-0808">Transferase</keyword>
<feature type="chain" id="PRO_1000012276" description="Lipoyl synthase">
    <location>
        <begin position="1"/>
        <end position="321"/>
    </location>
</feature>
<feature type="domain" description="Radical SAM core" evidence="2">
    <location>
        <begin position="80"/>
        <end position="297"/>
    </location>
</feature>
<feature type="binding site" evidence="1">
    <location>
        <position position="68"/>
    </location>
    <ligand>
        <name>[4Fe-4S] cluster</name>
        <dbReference type="ChEBI" id="CHEBI:49883"/>
        <label>1</label>
    </ligand>
</feature>
<feature type="binding site" evidence="1">
    <location>
        <position position="73"/>
    </location>
    <ligand>
        <name>[4Fe-4S] cluster</name>
        <dbReference type="ChEBI" id="CHEBI:49883"/>
        <label>1</label>
    </ligand>
</feature>
<feature type="binding site" evidence="1">
    <location>
        <position position="79"/>
    </location>
    <ligand>
        <name>[4Fe-4S] cluster</name>
        <dbReference type="ChEBI" id="CHEBI:49883"/>
        <label>1</label>
    </ligand>
</feature>
<feature type="binding site" evidence="1">
    <location>
        <position position="94"/>
    </location>
    <ligand>
        <name>[4Fe-4S] cluster</name>
        <dbReference type="ChEBI" id="CHEBI:49883"/>
        <label>2</label>
        <note>4Fe-4S-S-AdoMet</note>
    </ligand>
</feature>
<feature type="binding site" evidence="1">
    <location>
        <position position="98"/>
    </location>
    <ligand>
        <name>[4Fe-4S] cluster</name>
        <dbReference type="ChEBI" id="CHEBI:49883"/>
        <label>2</label>
        <note>4Fe-4S-S-AdoMet</note>
    </ligand>
</feature>
<feature type="binding site" evidence="1">
    <location>
        <position position="101"/>
    </location>
    <ligand>
        <name>[4Fe-4S] cluster</name>
        <dbReference type="ChEBI" id="CHEBI:49883"/>
        <label>2</label>
        <note>4Fe-4S-S-AdoMet</note>
    </ligand>
</feature>
<feature type="binding site" evidence="1">
    <location>
        <position position="308"/>
    </location>
    <ligand>
        <name>[4Fe-4S] cluster</name>
        <dbReference type="ChEBI" id="CHEBI:49883"/>
        <label>1</label>
    </ligand>
</feature>
<name>LIPA_SHELP</name>